<proteinExistence type="inferred from homology"/>
<sequence length="195" mass="21202">MSGAAMSYPRSPWRGALPPMAVYGQHWARWAVGVNSLTARLRAASSSFRVELLGQGRALPLRDEWRCLGLPRAAETLAREVLLICDEAPVVYAHTIVHPRSVAADWPFLRALGTQPLGHALFADPRVARGAFEFALLDGRHPLVKRAHAALGGTPPGAMARLPARRSVFRRGVSAMLVTEVFLPALAVFDPPPMM</sequence>
<dbReference type="EC" id="4.1.3.40" evidence="1"/>
<dbReference type="EMBL" id="AL646052">
    <property type="protein sequence ID" value="CAD16487.1"/>
    <property type="status" value="ALT_INIT"/>
    <property type="molecule type" value="Genomic_DNA"/>
</dbReference>
<dbReference type="RefSeq" id="WP_043876655.1">
    <property type="nucleotide sequence ID" value="NC_003295.1"/>
</dbReference>
<dbReference type="SMR" id="Q8XVQ0"/>
<dbReference type="STRING" id="267608.RSc2780"/>
<dbReference type="EnsemblBacteria" id="CAD16487">
    <property type="protein sequence ID" value="CAD16487"/>
    <property type="gene ID" value="RSc2780"/>
</dbReference>
<dbReference type="KEGG" id="rso:RSc2780"/>
<dbReference type="PATRIC" id="fig|267608.8.peg.2828"/>
<dbReference type="eggNOG" id="COG3161">
    <property type="taxonomic scope" value="Bacteria"/>
</dbReference>
<dbReference type="HOGENOM" id="CLU_096824_2_0_4"/>
<dbReference type="UniPathway" id="UPA00232"/>
<dbReference type="Proteomes" id="UP000001436">
    <property type="component" value="Chromosome"/>
</dbReference>
<dbReference type="GO" id="GO:0005829">
    <property type="term" value="C:cytosol"/>
    <property type="evidence" value="ECO:0007669"/>
    <property type="project" value="TreeGrafter"/>
</dbReference>
<dbReference type="GO" id="GO:0008813">
    <property type="term" value="F:chorismate lyase activity"/>
    <property type="evidence" value="ECO:0007669"/>
    <property type="project" value="UniProtKB-UniRule"/>
</dbReference>
<dbReference type="GO" id="GO:0042866">
    <property type="term" value="P:pyruvate biosynthetic process"/>
    <property type="evidence" value="ECO:0007669"/>
    <property type="project" value="UniProtKB-UniRule"/>
</dbReference>
<dbReference type="GO" id="GO:0006744">
    <property type="term" value="P:ubiquinone biosynthetic process"/>
    <property type="evidence" value="ECO:0007669"/>
    <property type="project" value="UniProtKB-UniRule"/>
</dbReference>
<dbReference type="Gene3D" id="3.40.1410.10">
    <property type="entry name" value="Chorismate lyase-like"/>
    <property type="match status" value="1"/>
</dbReference>
<dbReference type="HAMAP" id="MF_01632">
    <property type="entry name" value="UbiC"/>
    <property type="match status" value="1"/>
</dbReference>
<dbReference type="InterPro" id="IPR007440">
    <property type="entry name" value="Chorismate--pyruvate_lyase"/>
</dbReference>
<dbReference type="InterPro" id="IPR028978">
    <property type="entry name" value="Chorismate_lyase_/UTRA_dom_sf"/>
</dbReference>
<dbReference type="PANTHER" id="PTHR38683">
    <property type="entry name" value="CHORISMATE PYRUVATE-LYASE"/>
    <property type="match status" value="1"/>
</dbReference>
<dbReference type="PANTHER" id="PTHR38683:SF1">
    <property type="entry name" value="CHORISMATE PYRUVATE-LYASE"/>
    <property type="match status" value="1"/>
</dbReference>
<dbReference type="Pfam" id="PF04345">
    <property type="entry name" value="Chor_lyase"/>
    <property type="match status" value="1"/>
</dbReference>
<dbReference type="SUPFAM" id="SSF64288">
    <property type="entry name" value="Chorismate lyase-like"/>
    <property type="match status" value="1"/>
</dbReference>
<reference key="1">
    <citation type="journal article" date="2002" name="Nature">
        <title>Genome sequence of the plant pathogen Ralstonia solanacearum.</title>
        <authorList>
            <person name="Salanoubat M."/>
            <person name="Genin S."/>
            <person name="Artiguenave F."/>
            <person name="Gouzy J."/>
            <person name="Mangenot S."/>
            <person name="Arlat M."/>
            <person name="Billault A."/>
            <person name="Brottier P."/>
            <person name="Camus J.-C."/>
            <person name="Cattolico L."/>
            <person name="Chandler M."/>
            <person name="Choisne N."/>
            <person name="Claudel-Renard C."/>
            <person name="Cunnac S."/>
            <person name="Demange N."/>
            <person name="Gaspin C."/>
            <person name="Lavie M."/>
            <person name="Moisan A."/>
            <person name="Robert C."/>
            <person name="Saurin W."/>
            <person name="Schiex T."/>
            <person name="Siguier P."/>
            <person name="Thebault P."/>
            <person name="Whalen M."/>
            <person name="Wincker P."/>
            <person name="Levy M."/>
            <person name="Weissenbach J."/>
            <person name="Boucher C.A."/>
        </authorList>
    </citation>
    <scope>NUCLEOTIDE SEQUENCE [LARGE SCALE GENOMIC DNA]</scope>
    <source>
        <strain>ATCC BAA-1114 / GMI1000</strain>
    </source>
</reference>
<organism>
    <name type="scientific">Ralstonia nicotianae (strain ATCC BAA-1114 / GMI1000)</name>
    <name type="common">Ralstonia solanacearum</name>
    <dbReference type="NCBI Taxonomy" id="267608"/>
    <lineage>
        <taxon>Bacteria</taxon>
        <taxon>Pseudomonadati</taxon>
        <taxon>Pseudomonadota</taxon>
        <taxon>Betaproteobacteria</taxon>
        <taxon>Burkholderiales</taxon>
        <taxon>Burkholderiaceae</taxon>
        <taxon>Ralstonia</taxon>
        <taxon>Ralstonia solanacearum species complex</taxon>
    </lineage>
</organism>
<keyword id="KW-0963">Cytoplasm</keyword>
<keyword id="KW-0456">Lyase</keyword>
<keyword id="KW-0670">Pyruvate</keyword>
<keyword id="KW-1185">Reference proteome</keyword>
<keyword id="KW-0831">Ubiquinone biosynthesis</keyword>
<accession>Q8XVQ0</accession>
<protein>
    <recommendedName>
        <fullName evidence="1">Probable chorismate pyruvate-lyase</fullName>
        <shortName evidence="1">CL</shortName>
        <shortName evidence="1">CPL</shortName>
        <ecNumber evidence="1">4.1.3.40</ecNumber>
    </recommendedName>
</protein>
<gene>
    <name evidence="1" type="primary">ubiC</name>
    <name type="ordered locus">RSc2780</name>
</gene>
<name>UBIC_RALN1</name>
<feature type="chain" id="PRO_0000240567" description="Probable chorismate pyruvate-lyase">
    <location>
        <begin position="1"/>
        <end position="195"/>
    </location>
</feature>
<feature type="binding site" evidence="1">
    <location>
        <position position="79"/>
    </location>
    <ligand>
        <name>substrate</name>
    </ligand>
</feature>
<feature type="binding site" evidence="1">
    <location>
        <position position="117"/>
    </location>
    <ligand>
        <name>substrate</name>
    </ligand>
</feature>
<feature type="binding site" evidence="1">
    <location>
        <position position="180"/>
    </location>
    <ligand>
        <name>substrate</name>
    </ligand>
</feature>
<comment type="function">
    <text evidence="1">Removes the pyruvyl group from chorismate, with concomitant aromatization of the ring, to provide 4-hydroxybenzoate (4HB) for the ubiquinone pathway.</text>
</comment>
<comment type="catalytic activity">
    <reaction evidence="1">
        <text>chorismate = 4-hydroxybenzoate + pyruvate</text>
        <dbReference type="Rhea" id="RHEA:16505"/>
        <dbReference type="ChEBI" id="CHEBI:15361"/>
        <dbReference type="ChEBI" id="CHEBI:17879"/>
        <dbReference type="ChEBI" id="CHEBI:29748"/>
        <dbReference type="EC" id="4.1.3.40"/>
    </reaction>
</comment>
<comment type="pathway">
    <text evidence="1">Cofactor biosynthesis; ubiquinone biosynthesis.</text>
</comment>
<comment type="subcellular location">
    <subcellularLocation>
        <location evidence="1">Cytoplasm</location>
    </subcellularLocation>
</comment>
<comment type="similarity">
    <text evidence="1">Belongs to the UbiC family.</text>
</comment>
<comment type="sequence caution" evidence="2">
    <conflict type="erroneous initiation">
        <sequence resource="EMBL-CDS" id="CAD16487"/>
    </conflict>
    <text>Extended N-terminus.</text>
</comment>
<evidence type="ECO:0000255" key="1">
    <source>
        <dbReference type="HAMAP-Rule" id="MF_01632"/>
    </source>
</evidence>
<evidence type="ECO:0000305" key="2"/>